<accession>Q8WWY6</accession>
<accession>B5BUM6</accession>
<accession>Q2M291</accession>
<reference key="1">
    <citation type="journal article" date="2002" name="Genomics">
        <title>MBD3L1 and MBD3L2, two new proteins homologous to the methyl-CpG-binding proteins MBD2 and MBD3: characterization of MBD3L1 as a testis-specific transcriptional repressor.</title>
        <authorList>
            <person name="Jiang C.-L."/>
            <person name="Jin S.-G."/>
            <person name="Lee D.-H."/>
            <person name="Lan Z.-J."/>
            <person name="Xu X."/>
            <person name="O'Connor T.R."/>
            <person name="Szabo P.E."/>
            <person name="Mann J.R."/>
            <person name="Cooney A.J."/>
            <person name="Pfeifer G.P."/>
        </authorList>
    </citation>
    <scope>NUCLEOTIDE SEQUENCE [MRNA]</scope>
    <scope>FUNCTION</scope>
    <scope>SUBCELLULAR LOCATION</scope>
    <scope>TISSUE SPECIFICITY</scope>
    <scope>VARIANT CYS-190</scope>
</reference>
<reference key="2">
    <citation type="journal article" date="2008" name="Nat. Methods">
        <title>Human protein factory for converting the transcriptome into an in vitro-expressed proteome.</title>
        <authorList>
            <person name="Goshima N."/>
            <person name="Kawamura Y."/>
            <person name="Fukumoto A."/>
            <person name="Miura A."/>
            <person name="Honma R."/>
            <person name="Satoh R."/>
            <person name="Wakamatsu A."/>
            <person name="Yamamoto J."/>
            <person name="Kimura K."/>
            <person name="Nishikawa T."/>
            <person name="Andoh T."/>
            <person name="Iida Y."/>
            <person name="Ishikawa K."/>
            <person name="Ito E."/>
            <person name="Kagawa N."/>
            <person name="Kaminaga C."/>
            <person name="Kanehori K."/>
            <person name="Kawakami B."/>
            <person name="Kenmochi K."/>
            <person name="Kimura R."/>
            <person name="Kobayashi M."/>
            <person name="Kuroita T."/>
            <person name="Kuwayama H."/>
            <person name="Maruyama Y."/>
            <person name="Matsuo K."/>
            <person name="Minami K."/>
            <person name="Mitsubori M."/>
            <person name="Mori M."/>
            <person name="Morishita R."/>
            <person name="Murase A."/>
            <person name="Nishikawa A."/>
            <person name="Nishikawa S."/>
            <person name="Okamoto T."/>
            <person name="Sakagami N."/>
            <person name="Sakamoto Y."/>
            <person name="Sasaki Y."/>
            <person name="Seki T."/>
            <person name="Sono S."/>
            <person name="Sugiyama A."/>
            <person name="Sumiya T."/>
            <person name="Takayama T."/>
            <person name="Takayama Y."/>
            <person name="Takeda H."/>
            <person name="Togashi T."/>
            <person name="Yahata K."/>
            <person name="Yamada H."/>
            <person name="Yanagisawa Y."/>
            <person name="Endo Y."/>
            <person name="Imamoto F."/>
            <person name="Kisu Y."/>
            <person name="Tanaka S."/>
            <person name="Isogai T."/>
            <person name="Imai J."/>
            <person name="Watanabe S."/>
            <person name="Nomura N."/>
        </authorList>
    </citation>
    <scope>NUCLEOTIDE SEQUENCE [LARGE SCALE MRNA]</scope>
    <scope>VARIANT CYS-190</scope>
</reference>
<reference key="3">
    <citation type="journal article" date="2004" name="Nature">
        <title>The DNA sequence and biology of human chromosome 19.</title>
        <authorList>
            <person name="Grimwood J."/>
            <person name="Gordon L.A."/>
            <person name="Olsen A.S."/>
            <person name="Terry A."/>
            <person name="Schmutz J."/>
            <person name="Lamerdin J.E."/>
            <person name="Hellsten U."/>
            <person name="Goodstein D."/>
            <person name="Couronne O."/>
            <person name="Tran-Gyamfi M."/>
            <person name="Aerts A."/>
            <person name="Altherr M."/>
            <person name="Ashworth L."/>
            <person name="Bajorek E."/>
            <person name="Black S."/>
            <person name="Branscomb E."/>
            <person name="Caenepeel S."/>
            <person name="Carrano A.V."/>
            <person name="Caoile C."/>
            <person name="Chan Y.M."/>
            <person name="Christensen M."/>
            <person name="Cleland C.A."/>
            <person name="Copeland A."/>
            <person name="Dalin E."/>
            <person name="Dehal P."/>
            <person name="Denys M."/>
            <person name="Detter J.C."/>
            <person name="Escobar J."/>
            <person name="Flowers D."/>
            <person name="Fotopulos D."/>
            <person name="Garcia C."/>
            <person name="Georgescu A.M."/>
            <person name="Glavina T."/>
            <person name="Gomez M."/>
            <person name="Gonzales E."/>
            <person name="Groza M."/>
            <person name="Hammon N."/>
            <person name="Hawkins T."/>
            <person name="Haydu L."/>
            <person name="Ho I."/>
            <person name="Huang W."/>
            <person name="Israni S."/>
            <person name="Jett J."/>
            <person name="Kadner K."/>
            <person name="Kimball H."/>
            <person name="Kobayashi A."/>
            <person name="Larionov V."/>
            <person name="Leem S.-H."/>
            <person name="Lopez F."/>
            <person name="Lou Y."/>
            <person name="Lowry S."/>
            <person name="Malfatti S."/>
            <person name="Martinez D."/>
            <person name="McCready P.M."/>
            <person name="Medina C."/>
            <person name="Morgan J."/>
            <person name="Nelson K."/>
            <person name="Nolan M."/>
            <person name="Ovcharenko I."/>
            <person name="Pitluck S."/>
            <person name="Pollard M."/>
            <person name="Popkie A.P."/>
            <person name="Predki P."/>
            <person name="Quan G."/>
            <person name="Ramirez L."/>
            <person name="Rash S."/>
            <person name="Retterer J."/>
            <person name="Rodriguez A."/>
            <person name="Rogers S."/>
            <person name="Salamov A."/>
            <person name="Salazar A."/>
            <person name="She X."/>
            <person name="Smith D."/>
            <person name="Slezak T."/>
            <person name="Solovyev V."/>
            <person name="Thayer N."/>
            <person name="Tice H."/>
            <person name="Tsai M."/>
            <person name="Ustaszewska A."/>
            <person name="Vo N."/>
            <person name="Wagner M."/>
            <person name="Wheeler J."/>
            <person name="Wu K."/>
            <person name="Xie G."/>
            <person name="Yang J."/>
            <person name="Dubchak I."/>
            <person name="Furey T.S."/>
            <person name="DeJong P."/>
            <person name="Dickson M."/>
            <person name="Gordon D."/>
            <person name="Eichler E.E."/>
            <person name="Pennacchio L.A."/>
            <person name="Richardson P."/>
            <person name="Stubbs L."/>
            <person name="Rokhsar D.S."/>
            <person name="Myers R.M."/>
            <person name="Rubin E.M."/>
            <person name="Lucas S.M."/>
        </authorList>
    </citation>
    <scope>NUCLEOTIDE SEQUENCE [LARGE SCALE GENOMIC DNA]</scope>
</reference>
<reference key="4">
    <citation type="journal article" date="2004" name="Genome Res.">
        <title>The status, quality, and expansion of the NIH full-length cDNA project: the Mammalian Gene Collection (MGC).</title>
        <authorList>
            <consortium name="The MGC Project Team"/>
        </authorList>
    </citation>
    <scope>NUCLEOTIDE SEQUENCE [LARGE SCALE MRNA]</scope>
    <scope>VARIANT CYS-190</scope>
</reference>
<sequence>MAKSSQRKQRDCVNQCKSKPGLSTSIPLRMSSYTFKRPVTRITPHPGNEVRYHQWEESLEKPQQVCWQRRLQGLQAYSSAGELSSTLDLANTLQKLVPSYTGGSLLEDLASGLEHSCPMPHLACSSDAVEIIPAEGVGISQLLCKQFLVTEEDIRKQEGKVKTVRERLAIALIADGLANEAEKVRDQEGRPEKR</sequence>
<feature type="chain" id="PRO_0000096251" description="Methyl-CpG-binding domain protein 3-like 1">
    <location>
        <begin position="1"/>
        <end position="194"/>
    </location>
</feature>
<feature type="region of interest" description="Transcription repressor">
    <location>
        <begin position="1"/>
        <end position="104"/>
    </location>
</feature>
<feature type="sequence variant" id="VAR_051155" description="In dbSNP:rs2972588." evidence="1 2 3">
    <original>R</original>
    <variation>C</variation>
    <location>
        <position position="190"/>
    </location>
</feature>
<dbReference type="EMBL" id="AY038022">
    <property type="protein sequence ID" value="AAK72591.1"/>
    <property type="molecule type" value="mRNA"/>
</dbReference>
<dbReference type="EMBL" id="AB451462">
    <property type="protein sequence ID" value="BAG70276.1"/>
    <property type="molecule type" value="mRNA"/>
</dbReference>
<dbReference type="EMBL" id="AC008734">
    <property type="status" value="NOT_ANNOTATED_CDS"/>
    <property type="molecule type" value="Genomic_DNA"/>
</dbReference>
<dbReference type="EMBL" id="BC112064">
    <property type="protein sequence ID" value="AAI12065.1"/>
    <property type="molecule type" value="mRNA"/>
</dbReference>
<dbReference type="EMBL" id="BC112058">
    <property type="protein sequence ID" value="AAI12059.1"/>
    <property type="molecule type" value="mRNA"/>
</dbReference>
<dbReference type="CCDS" id="CCDS12209.1"/>
<dbReference type="RefSeq" id="NP_001380461.1">
    <property type="nucleotide sequence ID" value="NM_001393532.1"/>
</dbReference>
<dbReference type="RefSeq" id="NP_001380462.1">
    <property type="nucleotide sequence ID" value="NM_001393533.1"/>
</dbReference>
<dbReference type="RefSeq" id="NP_001380463.1">
    <property type="nucleotide sequence ID" value="NM_001393534.1"/>
</dbReference>
<dbReference type="RefSeq" id="NP_660209.2">
    <property type="nucleotide sequence ID" value="NM_145208.3"/>
</dbReference>
<dbReference type="SMR" id="Q8WWY6"/>
<dbReference type="BioGRID" id="124569">
    <property type="interactions" value="70"/>
</dbReference>
<dbReference type="FunCoup" id="Q8WWY6">
    <property type="interactions" value="432"/>
</dbReference>
<dbReference type="IntAct" id="Q8WWY6">
    <property type="interactions" value="63"/>
</dbReference>
<dbReference type="STRING" id="9606.ENSP00000471575"/>
<dbReference type="iPTMnet" id="Q8WWY6"/>
<dbReference type="PhosphoSitePlus" id="Q8WWY6"/>
<dbReference type="BioMuta" id="MBD3L1"/>
<dbReference type="DMDM" id="296436435"/>
<dbReference type="MassIVE" id="Q8WWY6"/>
<dbReference type="PaxDb" id="9606-ENSP00000471575"/>
<dbReference type="PeptideAtlas" id="Q8WWY6"/>
<dbReference type="Antibodypedia" id="24961">
    <property type="antibodies" value="110 antibodies from 17 providers"/>
</dbReference>
<dbReference type="DNASU" id="85509"/>
<dbReference type="Ensembl" id="ENST00000305625.2">
    <property type="protein sequence ID" value="ENSP00000304198.2"/>
    <property type="gene ID" value="ENSG00000170948.4"/>
</dbReference>
<dbReference type="Ensembl" id="ENST00000595891.2">
    <property type="protein sequence ID" value="ENSP00000471575.1"/>
    <property type="gene ID" value="ENSG00000170948.4"/>
</dbReference>
<dbReference type="Ensembl" id="ENST00000708557.1">
    <property type="protein sequence ID" value="ENSP00000517279.1"/>
    <property type="gene ID" value="ENSG00000291743.1"/>
</dbReference>
<dbReference type="Ensembl" id="ENST00000708558.1">
    <property type="protein sequence ID" value="ENSP00000517280.1"/>
    <property type="gene ID" value="ENSG00000291743.1"/>
</dbReference>
<dbReference type="GeneID" id="85509"/>
<dbReference type="KEGG" id="hsa:85509"/>
<dbReference type="MANE-Select" id="ENST00000595891.2">
    <property type="protein sequence ID" value="ENSP00000471575.1"/>
    <property type="RefSeq nucleotide sequence ID" value="NM_001393532.1"/>
    <property type="RefSeq protein sequence ID" value="NP_001380461.1"/>
</dbReference>
<dbReference type="UCSC" id="uc002mko.2">
    <property type="organism name" value="human"/>
</dbReference>
<dbReference type="AGR" id="HGNC:15774"/>
<dbReference type="CTD" id="85509"/>
<dbReference type="GeneCards" id="MBD3L1"/>
<dbReference type="HGNC" id="HGNC:15774">
    <property type="gene designation" value="MBD3L1"/>
</dbReference>
<dbReference type="HPA" id="ENSG00000170948">
    <property type="expression patterns" value="Tissue enriched (testis)"/>
</dbReference>
<dbReference type="MIM" id="607963">
    <property type="type" value="gene"/>
</dbReference>
<dbReference type="neXtProt" id="NX_Q8WWY6"/>
<dbReference type="OpenTargets" id="ENSG00000170948"/>
<dbReference type="PharmGKB" id="PA30662"/>
<dbReference type="VEuPathDB" id="HostDB:ENSG00000170948"/>
<dbReference type="eggNOG" id="KOG4161">
    <property type="taxonomic scope" value="Eukaryota"/>
</dbReference>
<dbReference type="GeneTree" id="ENSGT00950000183005"/>
<dbReference type="HOGENOM" id="CLU_069710_1_0_1"/>
<dbReference type="InParanoid" id="Q8WWY6"/>
<dbReference type="OMA" id="HDCGNQS"/>
<dbReference type="OrthoDB" id="10072024at2759"/>
<dbReference type="PAN-GO" id="Q8WWY6">
    <property type="GO annotations" value="0 GO annotations based on evolutionary models"/>
</dbReference>
<dbReference type="PhylomeDB" id="Q8WWY6"/>
<dbReference type="TreeFam" id="TF325032"/>
<dbReference type="PathwayCommons" id="Q8WWY6"/>
<dbReference type="SignaLink" id="Q8WWY6"/>
<dbReference type="BioGRID-ORCS" id="85509">
    <property type="hits" value="13 hits in 1154 CRISPR screens"/>
</dbReference>
<dbReference type="GenomeRNAi" id="85509"/>
<dbReference type="Pharos" id="Q8WWY6">
    <property type="development level" value="Tbio"/>
</dbReference>
<dbReference type="PRO" id="PR:Q8WWY6"/>
<dbReference type="Proteomes" id="UP000005640">
    <property type="component" value="Chromosome 19"/>
</dbReference>
<dbReference type="RNAct" id="Q8WWY6">
    <property type="molecule type" value="protein"/>
</dbReference>
<dbReference type="Bgee" id="ENSG00000170948">
    <property type="expression patterns" value="Expressed in male germ line stem cell (sensu Vertebrata) in testis and 38 other cell types or tissues"/>
</dbReference>
<dbReference type="GO" id="GO:0005634">
    <property type="term" value="C:nucleus"/>
    <property type="evidence" value="ECO:0000318"/>
    <property type="project" value="GO_Central"/>
</dbReference>
<dbReference type="GO" id="GO:0008327">
    <property type="term" value="F:methyl-CpG binding"/>
    <property type="evidence" value="ECO:0000318"/>
    <property type="project" value="GO_Central"/>
</dbReference>
<dbReference type="GO" id="GO:0006346">
    <property type="term" value="P:DNA methylation-dependent constitutive heterochromatin formation"/>
    <property type="evidence" value="ECO:0000318"/>
    <property type="project" value="GO_Central"/>
</dbReference>
<dbReference type="GO" id="GO:0000122">
    <property type="term" value="P:negative regulation of transcription by RNA polymerase II"/>
    <property type="evidence" value="ECO:0000318"/>
    <property type="project" value="GO_Central"/>
</dbReference>
<dbReference type="InterPro" id="IPR032343">
    <property type="entry name" value="MBD2/MBD3_p55-bd"/>
</dbReference>
<dbReference type="InterPro" id="IPR025884">
    <property type="entry name" value="MeCpG-bd_2/3_C_dom"/>
</dbReference>
<dbReference type="Pfam" id="PF14048">
    <property type="entry name" value="MBD_C"/>
    <property type="match status" value="1"/>
</dbReference>
<dbReference type="Pfam" id="PF16564">
    <property type="entry name" value="MBDa"/>
    <property type="match status" value="1"/>
</dbReference>
<organism>
    <name type="scientific">Homo sapiens</name>
    <name type="common">Human</name>
    <dbReference type="NCBI Taxonomy" id="9606"/>
    <lineage>
        <taxon>Eukaryota</taxon>
        <taxon>Metazoa</taxon>
        <taxon>Chordata</taxon>
        <taxon>Craniata</taxon>
        <taxon>Vertebrata</taxon>
        <taxon>Euteleostomi</taxon>
        <taxon>Mammalia</taxon>
        <taxon>Eutheria</taxon>
        <taxon>Euarchontoglires</taxon>
        <taxon>Primates</taxon>
        <taxon>Haplorrhini</taxon>
        <taxon>Catarrhini</taxon>
        <taxon>Hominidae</taxon>
        <taxon>Homo</taxon>
    </lineage>
</organism>
<comment type="function">
    <text evidence="1">Transcriptional repressor.</text>
</comment>
<comment type="interaction">
    <interactant intactId="EBI-12516603">
        <id>Q8WWY6</id>
    </interactant>
    <interactant intactId="EBI-8643161">
        <id>Q9NX04</id>
        <label>AIRIM</label>
    </interactant>
    <organismsDiffer>false</organismsDiffer>
    <experiments>3</experiments>
</comment>
<comment type="interaction">
    <interactant intactId="EBI-12516603">
        <id>Q8WWY6</id>
    </interactant>
    <interactant intactId="EBI-11954519">
        <id>Q49AR9</id>
        <label>ANKS1A</label>
    </interactant>
    <organismsDiffer>false</organismsDiffer>
    <experiments>3</experiments>
</comment>
<comment type="interaction">
    <interactant intactId="EBI-12516603">
        <id>Q8WWY6</id>
    </interactant>
    <interactant intactId="EBI-12006120">
        <id>A0A087WZT3</id>
        <label>BOLA2-SMG1P6</label>
    </interactant>
    <organismsDiffer>false</organismsDiffer>
    <experiments>3</experiments>
</comment>
<comment type="interaction">
    <interactant intactId="EBI-12516603">
        <id>Q8WWY6</id>
    </interactant>
    <interactant intactId="EBI-12049899">
        <id>Q96LT6</id>
        <label>C1orf74</label>
    </interactant>
    <organismsDiffer>false</organismsDiffer>
    <experiments>3</experiments>
</comment>
<comment type="interaction">
    <interactant intactId="EBI-12516603">
        <id>Q8WWY6</id>
    </interactant>
    <interactant intactId="EBI-11980535">
        <id>P51800-3</id>
        <label>CLCNKA</label>
    </interactant>
    <organismsDiffer>false</organismsDiffer>
    <experiments>3</experiments>
</comment>
<comment type="interaction">
    <interactant intactId="EBI-12516603">
        <id>Q8WWY6</id>
    </interactant>
    <interactant intactId="EBI-10192241">
        <id>O95833</id>
        <label>CLIC3</label>
    </interactant>
    <organismsDiffer>false</organismsDiffer>
    <experiments>3</experiments>
</comment>
<comment type="interaction">
    <interactant intactId="EBI-12516603">
        <id>Q8WWY6</id>
    </interactant>
    <interactant intactId="EBI-11962928">
        <id>Q9UI47-2</id>
        <label>CTNNA3</label>
    </interactant>
    <organismsDiffer>false</organismsDiffer>
    <experiments>3</experiments>
</comment>
<comment type="interaction">
    <interactant intactId="EBI-12516603">
        <id>Q8WWY6</id>
    </interactant>
    <interactant intactId="EBI-740376">
        <id>Q86UW9</id>
        <label>DTX2</label>
    </interactant>
    <organismsDiffer>false</organismsDiffer>
    <experiments>3</experiments>
</comment>
<comment type="interaction">
    <interactant intactId="EBI-12516603">
        <id>Q8WWY6</id>
    </interactant>
    <interactant intactId="EBI-743105">
        <id>Q5JVL4</id>
        <label>EFHC1</label>
    </interactant>
    <organismsDiffer>false</organismsDiffer>
    <experiments>3</experiments>
</comment>
<comment type="interaction">
    <interactant intactId="EBI-12516603">
        <id>Q8WWY6</id>
    </interactant>
    <interactant intactId="EBI-742102">
        <id>Q8IYI6</id>
        <label>EXOC8</label>
    </interactant>
    <organismsDiffer>false</organismsDiffer>
    <experiments>3</experiments>
</comment>
<comment type="interaction">
    <interactant intactId="EBI-12516603">
        <id>Q8WWY6</id>
    </interactant>
    <interactant intactId="EBI-11986315">
        <id>Q9H5Z6-2</id>
        <label>FAM124B</label>
    </interactant>
    <organismsDiffer>false</organismsDiffer>
    <experiments>3</experiments>
</comment>
<comment type="interaction">
    <interactant intactId="EBI-12516603">
        <id>Q8WWY6</id>
    </interactant>
    <interactant intactId="EBI-701903">
        <id>Q14192</id>
        <label>FHL2</label>
    </interactant>
    <organismsDiffer>false</organismsDiffer>
    <experiments>3</experiments>
</comment>
<comment type="interaction">
    <interactant intactId="EBI-12516603">
        <id>Q8WWY6</id>
    </interactant>
    <interactant intactId="EBI-10242151">
        <id>Q53EP0-3</id>
        <label>FNDC3B</label>
    </interactant>
    <organismsDiffer>false</organismsDiffer>
    <experiments>3</experiments>
</comment>
<comment type="interaction">
    <interactant intactId="EBI-12516603">
        <id>Q8WWY6</id>
    </interactant>
    <interactant intactId="EBI-725515">
        <id>O43559</id>
        <label>FRS3</label>
    </interactant>
    <organismsDiffer>false</organismsDiffer>
    <experiments>3</experiments>
</comment>
<comment type="interaction">
    <interactant intactId="EBI-12516603">
        <id>Q8WWY6</id>
    </interactant>
    <interactant intactId="EBI-726224">
        <id>Q86YP4</id>
        <label>GATAD2A</label>
    </interactant>
    <organismsDiffer>false</organismsDiffer>
    <experiments>5</experiments>
</comment>
<comment type="interaction">
    <interactant intactId="EBI-12516603">
        <id>Q8WWY6</id>
    </interactant>
    <interactant intactId="EBI-347538">
        <id>Q9Y4H4</id>
        <label>GPSM3</label>
    </interactant>
    <organismsDiffer>false</organismsDiffer>
    <experiments>3</experiments>
</comment>
<comment type="interaction">
    <interactant intactId="EBI-12516603">
        <id>Q8WWY6</id>
    </interactant>
    <interactant intactId="EBI-372530">
        <id>Q9UHL9</id>
        <label>GTF2IRD1</label>
    </interactant>
    <organismsDiffer>false</organismsDiffer>
    <experiments>3</experiments>
</comment>
<comment type="interaction">
    <interactant intactId="EBI-12516603">
        <id>Q8WWY6</id>
    </interactant>
    <interactant intactId="EBI-740290">
        <id>Q969Y2</id>
        <label>GTPBP3</label>
    </interactant>
    <organismsDiffer>false</organismsDiffer>
    <experiments>3</experiments>
</comment>
<comment type="interaction">
    <interactant intactId="EBI-12516603">
        <id>Q8WWY6</id>
    </interactant>
    <interactant intactId="EBI-17178971">
        <id>Q14005-2</id>
        <label>IL16</label>
    </interactant>
    <organismsDiffer>false</organismsDiffer>
    <experiments>3</experiments>
</comment>
<comment type="interaction">
    <interactant intactId="EBI-12516603">
        <id>Q8WWY6</id>
    </interactant>
    <interactant intactId="EBI-4397613">
        <id>Q7L273</id>
        <label>KCTD9</label>
    </interactant>
    <organismsDiffer>false</organismsDiffer>
    <experiments>3</experiments>
</comment>
<comment type="interaction">
    <interactant intactId="EBI-12516603">
        <id>Q8WWY6</id>
    </interactant>
    <interactant intactId="EBI-14069005">
        <id>Q9BVG8-5</id>
        <label>KIFC3</label>
    </interactant>
    <organismsDiffer>false</organismsDiffer>
    <experiments>3</experiments>
</comment>
<comment type="interaction">
    <interactant intactId="EBI-12516603">
        <id>Q8WWY6</id>
    </interactant>
    <interactant intactId="EBI-8639312">
        <id>P25800</id>
        <label>LMO1</label>
    </interactant>
    <organismsDiffer>false</organismsDiffer>
    <experiments>3</experiments>
</comment>
<comment type="interaction">
    <interactant intactId="EBI-12516603">
        <id>Q8WWY6</id>
    </interactant>
    <interactant intactId="EBI-11742507">
        <id>Q8TAP4-4</id>
        <label>LMO3</label>
    </interactant>
    <organismsDiffer>false</organismsDiffer>
    <experiments>3</experiments>
</comment>
<comment type="interaction">
    <interactant intactId="EBI-12516603">
        <id>Q8WWY6</id>
    </interactant>
    <interactant intactId="EBI-77889">
        <id>Q9UI95</id>
        <label>MAD2L2</label>
    </interactant>
    <organismsDiffer>false</organismsDiffer>
    <experiments>3</experiments>
</comment>
<comment type="interaction">
    <interactant intactId="EBI-12516603">
        <id>Q8WWY6</id>
    </interactant>
    <interactant intactId="EBI-744248">
        <id>P40692</id>
        <label>MLH1</label>
    </interactant>
    <organismsDiffer>false</organismsDiffer>
    <experiments>3</experiments>
</comment>
<comment type="interaction">
    <interactant intactId="EBI-12516603">
        <id>Q8WWY6</id>
    </interactant>
    <interactant intactId="EBI-2350461">
        <id>Q15777</id>
        <label>MPPED2</label>
    </interactant>
    <organismsDiffer>false</organismsDiffer>
    <experiments>3</experiments>
</comment>
<comment type="interaction">
    <interactant intactId="EBI-12516603">
        <id>Q8WWY6</id>
    </interactant>
    <interactant intactId="EBI-2114801">
        <id>Q9BU61</id>
        <label>NDUFAF3</label>
    </interactant>
    <organismsDiffer>false</organismsDiffer>
    <experiments>3</experiments>
</comment>
<comment type="interaction">
    <interactant intactId="EBI-12516603">
        <id>Q8WWY6</id>
    </interactant>
    <interactant intactId="EBI-11750983">
        <id>Q9HC98-4</id>
        <label>NEK6</label>
    </interactant>
    <organismsDiffer>false</organismsDiffer>
    <experiments>5</experiments>
</comment>
<comment type="interaction">
    <interactant intactId="EBI-12516603">
        <id>Q8WWY6</id>
    </interactant>
    <interactant intactId="EBI-398874">
        <id>Q9UBU9</id>
        <label>NXF1</label>
    </interactant>
    <organismsDiffer>false</organismsDiffer>
    <experiments>3</experiments>
</comment>
<comment type="interaction">
    <interactant intactId="EBI-12516603">
        <id>Q8WWY6</id>
    </interactant>
    <interactant intactId="EBI-747035">
        <id>Q9H788</id>
        <label>SH2D4A</label>
    </interactant>
    <organismsDiffer>false</organismsDiffer>
    <experiments>3</experiments>
</comment>
<comment type="interaction">
    <interactant intactId="EBI-12516603">
        <id>Q8WWY6</id>
    </interactant>
    <interactant intactId="EBI-12004298">
        <id>O75971-2</id>
        <label>SNAPC5</label>
    </interactant>
    <organismsDiffer>false</organismsDiffer>
    <experiments>3</experiments>
</comment>
<comment type="interaction">
    <interactant intactId="EBI-12516603">
        <id>Q8WWY6</id>
    </interactant>
    <interactant intactId="EBI-372475">
        <id>P14678-2</id>
        <label>SNRPB</label>
    </interactant>
    <organismsDiffer>false</organismsDiffer>
    <experiments>3</experiments>
</comment>
<comment type="interaction">
    <interactant intactId="EBI-12516603">
        <id>Q8WWY6</id>
    </interactant>
    <interactant intactId="EBI-714135">
        <id>O75558</id>
        <label>STX11</label>
    </interactant>
    <organismsDiffer>false</organismsDiffer>
    <experiments>3</experiments>
</comment>
<comment type="interaction">
    <interactant intactId="EBI-12516603">
        <id>Q8WWY6</id>
    </interactant>
    <interactant intactId="EBI-3921347">
        <id>P51687</id>
        <label>SUOX</label>
    </interactant>
    <organismsDiffer>false</organismsDiffer>
    <experiments>3</experiments>
</comment>
<comment type="interaction">
    <interactant intactId="EBI-12516603">
        <id>Q8WWY6</id>
    </interactant>
    <interactant intactId="EBI-11961968">
        <id>P0DI81-3</id>
        <label>TRAPPC2</label>
    </interactant>
    <organismsDiffer>false</organismsDiffer>
    <experiments>3</experiments>
</comment>
<comment type="interaction">
    <interactant intactId="EBI-12516603">
        <id>Q8WWY6</id>
    </interactant>
    <interactant intactId="EBI-744794">
        <id>Q9BZW7</id>
        <label>TSGA10</label>
    </interactant>
    <organismsDiffer>false</organismsDiffer>
    <experiments>3</experiments>
</comment>
<comment type="interaction">
    <interactant intactId="EBI-12516603">
        <id>Q8WWY6</id>
    </interactant>
    <interactant intactId="EBI-10241197">
        <id>Q3SY00</id>
        <label>TSGA10IP</label>
    </interactant>
    <organismsDiffer>false</organismsDiffer>
    <experiments>3</experiments>
</comment>
<comment type="interaction">
    <interactant intactId="EBI-12516603">
        <id>Q8WWY6</id>
    </interactant>
    <interactant intactId="EBI-3918381">
        <id>Q96PN8</id>
        <label>TSSK3</label>
    </interactant>
    <organismsDiffer>false</organismsDiffer>
    <experiments>3</experiments>
</comment>
<comment type="interaction">
    <interactant intactId="EBI-12516603">
        <id>Q8WWY6</id>
    </interactant>
    <interactant intactId="EBI-607755">
        <id>Q9BZL1</id>
        <label>UBL5</label>
    </interactant>
    <organismsDiffer>false</organismsDiffer>
    <experiments>3</experiments>
</comment>
<comment type="interaction">
    <interactant intactId="EBI-12516603">
        <id>Q8WWY6</id>
    </interactant>
    <interactant intactId="EBI-2511991">
        <id>Q9Y2K6</id>
        <label>USP20</label>
    </interactant>
    <organismsDiffer>false</organismsDiffer>
    <experiments>3</experiments>
</comment>
<comment type="interaction">
    <interactant intactId="EBI-12516603">
        <id>Q8WWY6</id>
    </interactant>
    <interactant intactId="EBI-7254550">
        <id>P36508</id>
        <label>ZNF76</label>
    </interactant>
    <organismsDiffer>false</organismsDiffer>
    <experiments>3</experiments>
</comment>
<comment type="interaction">
    <interactant intactId="EBI-12516603">
        <id>Q8WWY6</id>
    </interactant>
    <interactant intactId="EBI-12840750">
        <id>Q15935</id>
        <label>ZNF77</label>
    </interactant>
    <organismsDiffer>false</organismsDiffer>
    <experiments>3</experiments>
</comment>
<comment type="subcellular location">
    <subcellularLocation>
        <location evidence="1">Nucleus</location>
    </subcellularLocation>
    <text>Nuclear, in large foci.</text>
</comment>
<comment type="tissue specificity">
    <text evidence="1">Highly expressed in testis. Detected at low levels in pancreas. Not detected in the other tissues tested.</text>
</comment>
<comment type="domain">
    <text>The N-terminal half of the protein mediates transcription repression.</text>
</comment>
<comment type="miscellaneous">
    <text>Does not bind methylated DNA.</text>
</comment>
<comment type="miscellaneous">
    <text>The MBD3L proteins are encoded by strongly repeated regions of the 19p13 chromosome. The exact number of functional copies is unclear, and some of them may represent pseudogenes.</text>
</comment>
<comment type="similarity">
    <text evidence="4">Belongs to the MBD3L family.</text>
</comment>
<gene>
    <name type="primary">MBD3L1</name>
    <name type="synonym">MBD3L</name>
</gene>
<name>MB3L1_HUMAN</name>
<proteinExistence type="evidence at protein level"/>
<protein>
    <recommendedName>
        <fullName>Methyl-CpG-binding domain protein 3-like 1</fullName>
        <shortName>MBD3-like protein 1</shortName>
    </recommendedName>
</protein>
<evidence type="ECO:0000269" key="1">
    <source>
    </source>
</evidence>
<evidence type="ECO:0000269" key="2">
    <source>
    </source>
</evidence>
<evidence type="ECO:0000269" key="3">
    <source>
    </source>
</evidence>
<evidence type="ECO:0000305" key="4"/>
<keyword id="KW-0539">Nucleus</keyword>
<keyword id="KW-1267">Proteomics identification</keyword>
<keyword id="KW-1185">Reference proteome</keyword>
<keyword id="KW-0678">Repressor</keyword>
<keyword id="KW-0804">Transcription</keyword>
<keyword id="KW-0805">Transcription regulation</keyword>